<feature type="chain" id="PRO_1000078017" description="Anthranilate phosphoribosyltransferase">
    <location>
        <begin position="1"/>
        <end position="346"/>
    </location>
</feature>
<feature type="binding site" evidence="1">
    <location>
        <position position="81"/>
    </location>
    <ligand>
        <name>5-phospho-alpha-D-ribose 1-diphosphate</name>
        <dbReference type="ChEBI" id="CHEBI:58017"/>
    </ligand>
</feature>
<feature type="binding site" evidence="1">
    <location>
        <position position="81"/>
    </location>
    <ligand>
        <name>anthranilate</name>
        <dbReference type="ChEBI" id="CHEBI:16567"/>
        <label>1</label>
    </ligand>
</feature>
<feature type="binding site" evidence="1">
    <location>
        <begin position="84"/>
        <end position="85"/>
    </location>
    <ligand>
        <name>5-phospho-alpha-D-ribose 1-diphosphate</name>
        <dbReference type="ChEBI" id="CHEBI:58017"/>
    </ligand>
</feature>
<feature type="binding site" evidence="1">
    <location>
        <begin position="91"/>
        <end position="94"/>
    </location>
    <ligand>
        <name>5-phospho-alpha-D-ribose 1-diphosphate</name>
        <dbReference type="ChEBI" id="CHEBI:58017"/>
    </ligand>
</feature>
<feature type="binding site" evidence="1">
    <location>
        <position position="93"/>
    </location>
    <ligand>
        <name>Mg(2+)</name>
        <dbReference type="ChEBI" id="CHEBI:18420"/>
        <label>1</label>
    </ligand>
</feature>
<feature type="binding site" evidence="1">
    <location>
        <begin position="109"/>
        <end position="117"/>
    </location>
    <ligand>
        <name>5-phospho-alpha-D-ribose 1-diphosphate</name>
        <dbReference type="ChEBI" id="CHEBI:58017"/>
    </ligand>
</feature>
<feature type="binding site" evidence="1">
    <location>
        <position position="121"/>
    </location>
    <ligand>
        <name>5-phospho-alpha-D-ribose 1-diphosphate</name>
        <dbReference type="ChEBI" id="CHEBI:58017"/>
    </ligand>
</feature>
<feature type="binding site" evidence="1">
    <location>
        <position position="167"/>
    </location>
    <ligand>
        <name>anthranilate</name>
        <dbReference type="ChEBI" id="CHEBI:16567"/>
        <label>2</label>
    </ligand>
</feature>
<feature type="binding site" evidence="1">
    <location>
        <position position="226"/>
    </location>
    <ligand>
        <name>Mg(2+)</name>
        <dbReference type="ChEBI" id="CHEBI:18420"/>
        <label>2</label>
    </ligand>
</feature>
<feature type="binding site" evidence="1">
    <location>
        <position position="227"/>
    </location>
    <ligand>
        <name>Mg(2+)</name>
        <dbReference type="ChEBI" id="CHEBI:18420"/>
        <label>1</label>
    </ligand>
</feature>
<feature type="binding site" evidence="1">
    <location>
        <position position="227"/>
    </location>
    <ligand>
        <name>Mg(2+)</name>
        <dbReference type="ChEBI" id="CHEBI:18420"/>
        <label>2</label>
    </ligand>
</feature>
<proteinExistence type="inferred from homology"/>
<accession>A6VU64</accession>
<keyword id="KW-0028">Amino-acid biosynthesis</keyword>
<keyword id="KW-0057">Aromatic amino acid biosynthesis</keyword>
<keyword id="KW-0328">Glycosyltransferase</keyword>
<keyword id="KW-0460">Magnesium</keyword>
<keyword id="KW-0479">Metal-binding</keyword>
<keyword id="KW-0808">Transferase</keyword>
<keyword id="KW-0822">Tryptophan biosynthesis</keyword>
<reference key="1">
    <citation type="submission" date="2007-06" db="EMBL/GenBank/DDBJ databases">
        <title>Complete sequence of Marinomonas sp. MWYL1.</title>
        <authorList>
            <consortium name="US DOE Joint Genome Institute"/>
            <person name="Copeland A."/>
            <person name="Lucas S."/>
            <person name="Lapidus A."/>
            <person name="Barry K."/>
            <person name="Glavina del Rio T."/>
            <person name="Dalin E."/>
            <person name="Tice H."/>
            <person name="Pitluck S."/>
            <person name="Kiss H."/>
            <person name="Brettin T."/>
            <person name="Bruce D."/>
            <person name="Detter J.C."/>
            <person name="Han C."/>
            <person name="Schmutz J."/>
            <person name="Larimer F."/>
            <person name="Land M."/>
            <person name="Hauser L."/>
            <person name="Kyrpides N."/>
            <person name="Kim E."/>
            <person name="Johnston A.W.B."/>
            <person name="Todd J.D."/>
            <person name="Rogers R."/>
            <person name="Wexler M."/>
            <person name="Bond P.L."/>
            <person name="Li Y."/>
            <person name="Richardson P."/>
        </authorList>
    </citation>
    <scope>NUCLEOTIDE SEQUENCE [LARGE SCALE GENOMIC DNA]</scope>
    <source>
        <strain>MWYL1</strain>
    </source>
</reference>
<gene>
    <name evidence="1" type="primary">trpD</name>
    <name type="ordered locus">Mmwyl1_1062</name>
</gene>
<sequence length="346" mass="36299">MDIKKAIAAVVERQDLSGGEMQVVMHDIMTGKATPAQIGGFLIGLRMKGETVEEITAAAQVMRSLSSKVHLDLEHVVDTCGTGGDGGNLFNVSTASAFVVASAGGKVAKHGGRSVSSKSGSADVLEQAGIYLGLDAEQVCRCVEEIGLGFMFAPNHHSAMKYAVGPRKEMATRTIFNLLGPLTNPANAKCQVMGVFHQKWVRPIAEVLKALGSEHVMVVHSEDGLDEISIAAPTYVAELKNGEILEYKISPEDFGIPLQSIDTIQAADASESLALVKMALDGKGKINPARDIVALNAGAAIYVSGIADTLAEGVNIAEDVIGGGTAKVKMSELASFTRCFMSPDSL</sequence>
<organism>
    <name type="scientific">Marinomonas sp. (strain MWYL1)</name>
    <dbReference type="NCBI Taxonomy" id="400668"/>
    <lineage>
        <taxon>Bacteria</taxon>
        <taxon>Pseudomonadati</taxon>
        <taxon>Pseudomonadota</taxon>
        <taxon>Gammaproteobacteria</taxon>
        <taxon>Oceanospirillales</taxon>
        <taxon>Oceanospirillaceae</taxon>
        <taxon>Marinomonas</taxon>
    </lineage>
</organism>
<evidence type="ECO:0000255" key="1">
    <source>
        <dbReference type="HAMAP-Rule" id="MF_00211"/>
    </source>
</evidence>
<dbReference type="EC" id="2.4.2.18" evidence="1"/>
<dbReference type="EMBL" id="CP000749">
    <property type="protein sequence ID" value="ABR69993.1"/>
    <property type="molecule type" value="Genomic_DNA"/>
</dbReference>
<dbReference type="SMR" id="A6VU64"/>
<dbReference type="STRING" id="400668.Mmwyl1_1062"/>
<dbReference type="KEGG" id="mmw:Mmwyl1_1062"/>
<dbReference type="eggNOG" id="COG0547">
    <property type="taxonomic scope" value="Bacteria"/>
</dbReference>
<dbReference type="HOGENOM" id="CLU_034315_2_1_6"/>
<dbReference type="OrthoDB" id="9806430at2"/>
<dbReference type="UniPathway" id="UPA00035">
    <property type="reaction ID" value="UER00041"/>
</dbReference>
<dbReference type="GO" id="GO:0005829">
    <property type="term" value="C:cytosol"/>
    <property type="evidence" value="ECO:0007669"/>
    <property type="project" value="TreeGrafter"/>
</dbReference>
<dbReference type="GO" id="GO:0004048">
    <property type="term" value="F:anthranilate phosphoribosyltransferase activity"/>
    <property type="evidence" value="ECO:0007669"/>
    <property type="project" value="UniProtKB-UniRule"/>
</dbReference>
<dbReference type="GO" id="GO:0000287">
    <property type="term" value="F:magnesium ion binding"/>
    <property type="evidence" value="ECO:0007669"/>
    <property type="project" value="UniProtKB-UniRule"/>
</dbReference>
<dbReference type="GO" id="GO:0000162">
    <property type="term" value="P:L-tryptophan biosynthetic process"/>
    <property type="evidence" value="ECO:0007669"/>
    <property type="project" value="UniProtKB-UniRule"/>
</dbReference>
<dbReference type="FunFam" id="1.20.970.10:FF:000006">
    <property type="entry name" value="Anthranilate phosphoribosyltransferase"/>
    <property type="match status" value="1"/>
</dbReference>
<dbReference type="FunFam" id="3.40.1030.10:FF:000002">
    <property type="entry name" value="Anthranilate phosphoribosyltransferase"/>
    <property type="match status" value="1"/>
</dbReference>
<dbReference type="Gene3D" id="3.40.1030.10">
    <property type="entry name" value="Nucleoside phosphorylase/phosphoribosyltransferase catalytic domain"/>
    <property type="match status" value="1"/>
</dbReference>
<dbReference type="Gene3D" id="1.20.970.10">
    <property type="entry name" value="Transferase, Pyrimidine Nucleoside Phosphorylase, Chain C"/>
    <property type="match status" value="1"/>
</dbReference>
<dbReference type="HAMAP" id="MF_00211">
    <property type="entry name" value="TrpD"/>
    <property type="match status" value="1"/>
</dbReference>
<dbReference type="InterPro" id="IPR005940">
    <property type="entry name" value="Anthranilate_Pribosyl_Tfrase"/>
</dbReference>
<dbReference type="InterPro" id="IPR000312">
    <property type="entry name" value="Glycosyl_Trfase_fam3"/>
</dbReference>
<dbReference type="InterPro" id="IPR017459">
    <property type="entry name" value="Glycosyl_Trfase_fam3_N_dom"/>
</dbReference>
<dbReference type="InterPro" id="IPR036320">
    <property type="entry name" value="Glycosyl_Trfase_fam3_N_dom_sf"/>
</dbReference>
<dbReference type="InterPro" id="IPR035902">
    <property type="entry name" value="Nuc_phospho_transferase"/>
</dbReference>
<dbReference type="NCBIfam" id="TIGR01245">
    <property type="entry name" value="trpD"/>
    <property type="match status" value="1"/>
</dbReference>
<dbReference type="PANTHER" id="PTHR43285">
    <property type="entry name" value="ANTHRANILATE PHOSPHORIBOSYLTRANSFERASE"/>
    <property type="match status" value="1"/>
</dbReference>
<dbReference type="PANTHER" id="PTHR43285:SF2">
    <property type="entry name" value="ANTHRANILATE PHOSPHORIBOSYLTRANSFERASE"/>
    <property type="match status" value="1"/>
</dbReference>
<dbReference type="Pfam" id="PF02885">
    <property type="entry name" value="Glycos_trans_3N"/>
    <property type="match status" value="1"/>
</dbReference>
<dbReference type="Pfam" id="PF00591">
    <property type="entry name" value="Glycos_transf_3"/>
    <property type="match status" value="1"/>
</dbReference>
<dbReference type="SUPFAM" id="SSF52418">
    <property type="entry name" value="Nucleoside phosphorylase/phosphoribosyltransferase catalytic domain"/>
    <property type="match status" value="1"/>
</dbReference>
<dbReference type="SUPFAM" id="SSF47648">
    <property type="entry name" value="Nucleoside phosphorylase/phosphoribosyltransferase N-terminal domain"/>
    <property type="match status" value="1"/>
</dbReference>
<protein>
    <recommendedName>
        <fullName evidence="1">Anthranilate phosphoribosyltransferase</fullName>
        <ecNumber evidence="1">2.4.2.18</ecNumber>
    </recommendedName>
</protein>
<comment type="function">
    <text evidence="1">Catalyzes the transfer of the phosphoribosyl group of 5-phosphorylribose-1-pyrophosphate (PRPP) to anthranilate to yield N-(5'-phosphoribosyl)-anthranilate (PRA).</text>
</comment>
<comment type="catalytic activity">
    <reaction evidence="1">
        <text>N-(5-phospho-beta-D-ribosyl)anthranilate + diphosphate = 5-phospho-alpha-D-ribose 1-diphosphate + anthranilate</text>
        <dbReference type="Rhea" id="RHEA:11768"/>
        <dbReference type="ChEBI" id="CHEBI:16567"/>
        <dbReference type="ChEBI" id="CHEBI:18277"/>
        <dbReference type="ChEBI" id="CHEBI:33019"/>
        <dbReference type="ChEBI" id="CHEBI:58017"/>
        <dbReference type="EC" id="2.4.2.18"/>
    </reaction>
</comment>
<comment type="cofactor">
    <cofactor evidence="1">
        <name>Mg(2+)</name>
        <dbReference type="ChEBI" id="CHEBI:18420"/>
    </cofactor>
    <text evidence="1">Binds 2 magnesium ions per monomer.</text>
</comment>
<comment type="pathway">
    <text evidence="1">Amino-acid biosynthesis; L-tryptophan biosynthesis; L-tryptophan from chorismate: step 2/5.</text>
</comment>
<comment type="subunit">
    <text evidence="1">Homodimer.</text>
</comment>
<comment type="similarity">
    <text evidence="1">Belongs to the anthranilate phosphoribosyltransferase family.</text>
</comment>
<name>TRPD_MARMS</name>